<proteinExistence type="inferred from homology"/>
<feature type="signal peptide" evidence="6">
    <location>
        <begin position="1"/>
        <end position="22"/>
    </location>
</feature>
<feature type="propeptide" id="PRO_0000035351" evidence="1">
    <location>
        <begin position="23"/>
        <end position="31"/>
    </location>
</feature>
<feature type="chain" id="PRO_0000035352" description="Opicalcin-1">
    <location>
        <begin position="34"/>
        <end position="66"/>
    </location>
</feature>
<feature type="region of interest" description="Essential for stimulation of [3H]ryanodine binding to RYR1" evidence="4 5">
    <location>
        <begin position="55"/>
        <end position="57"/>
    </location>
</feature>
<feature type="site" description="Essential for stimulation of [3H]ryanodine binding to RYR1" evidence="4">
    <location>
        <position position="64"/>
    </location>
</feature>
<feature type="site" description="Essential for stimulation of [3H]ryanodine binding to RYR1" evidence="4">
    <location>
        <position position="66"/>
    </location>
</feature>
<feature type="disulfide bond" evidence="4">
    <location>
        <begin position="36"/>
        <end position="50"/>
    </location>
</feature>
<feature type="disulfide bond" evidence="4">
    <location>
        <begin position="43"/>
        <end position="54"/>
    </location>
</feature>
<feature type="disulfide bond" evidence="4">
    <location>
        <begin position="49"/>
        <end position="65"/>
    </location>
</feature>
<accession>P60252</accession>
<name>CAOP1_OPICA</name>
<evidence type="ECO:0000250" key="1"/>
<evidence type="ECO:0000250" key="2">
    <source>
        <dbReference type="UniProtKB" id="A0A1L4BJ42"/>
    </source>
</evidence>
<evidence type="ECO:0000250" key="3">
    <source>
        <dbReference type="UniProtKB" id="B8QG00"/>
    </source>
</evidence>
<evidence type="ECO:0000250" key="4">
    <source>
        <dbReference type="UniProtKB" id="P59868"/>
    </source>
</evidence>
<evidence type="ECO:0000250" key="5">
    <source>
        <dbReference type="UniProtKB" id="P60254"/>
    </source>
</evidence>
<evidence type="ECO:0000255" key="6"/>
<evidence type="ECO:0000269" key="7">
    <source>
    </source>
</evidence>
<evidence type="ECO:0000303" key="8">
    <source>
    </source>
</evidence>
<evidence type="ECO:0000303" key="9">
    <source>
    </source>
</evidence>
<evidence type="ECO:0000305" key="10"/>
<reference key="1">
    <citation type="journal article" date="2003" name="FASEB J.">
        <title>Evolutionary origin of inhibitor cystine knot peptides.</title>
        <authorList>
            <person name="Zhu S.-Y."/>
            <person name="Darbon H."/>
            <person name="Dyason K."/>
            <person name="Verdonck F."/>
            <person name="Tytgat J."/>
        </authorList>
    </citation>
    <scope>NUCLEOTIDE SEQUENCE [GENOMIC DNA]</scope>
    <source>
        <tissue>Venom gland</tissue>
    </source>
</reference>
<reference key="2">
    <citation type="journal article" date="2016" name="J. Gen. Physiol.">
        <title>Structure-function relationships of peptides forming the calcin family of ryanodine receptor ligands.</title>
        <authorList>
            <person name="Xiao L."/>
            <person name="Gurrola G.B."/>
            <person name="Zhang J."/>
            <person name="Valdivia C.R."/>
            <person name="SanMartin M."/>
            <person name="Zamudio F.Z."/>
            <person name="Zhang L."/>
            <person name="Possani L.D."/>
            <person name="Valdivia H.H."/>
        </authorList>
    </citation>
    <scope>FUNCTION</scope>
    <scope>SYNTHESIS OF 34-66</scope>
    <scope>3D-STRUCTURE MODELING</scope>
</reference>
<sequence length="66" mass="7644">MKPSLIIVTFIVVFMAISCVAADDEQETWIEKRGDCLPHLKRCKENNDCCSKKCKRRGTNPEKRCR</sequence>
<dbReference type="EMBL" id="AY225784">
    <property type="protein sequence ID" value="AAP73822.1"/>
    <property type="molecule type" value="Genomic_DNA"/>
</dbReference>
<dbReference type="GO" id="GO:0005576">
    <property type="term" value="C:extracellular region"/>
    <property type="evidence" value="ECO:0007669"/>
    <property type="project" value="UniProtKB-SubCell"/>
</dbReference>
<dbReference type="GO" id="GO:0019855">
    <property type="term" value="F:calcium channel inhibitor activity"/>
    <property type="evidence" value="ECO:0007669"/>
    <property type="project" value="InterPro"/>
</dbReference>
<dbReference type="GO" id="GO:0090729">
    <property type="term" value="F:toxin activity"/>
    <property type="evidence" value="ECO:0007669"/>
    <property type="project" value="UniProtKB-KW"/>
</dbReference>
<dbReference type="InterPro" id="IPR012632">
    <property type="entry name" value="Scorpion_calcine"/>
</dbReference>
<dbReference type="Pfam" id="PF08099">
    <property type="entry name" value="Toxin_27"/>
    <property type="match status" value="1"/>
</dbReference>
<dbReference type="SUPFAM" id="SSF57059">
    <property type="entry name" value="omega toxin-like"/>
    <property type="match status" value="1"/>
</dbReference>
<dbReference type="PROSITE" id="PS60028">
    <property type="entry name" value="SCORPION_CALCINE"/>
    <property type="match status" value="1"/>
</dbReference>
<comment type="function">
    <text evidence="2 3 4 5 7">This toxin stabilizes ryanodine receptor 1 (RyR1) opening in a long-lasting subconductance state (35% of the full conductance state) (PubMed:27114612). Furthermore, it triggers calcium release from sarcoplasmic vesicles (2 nM are enough to induce a sharp release, and 67% of the total calcium is released after toxin (100 nM) addition) probably by acting as a cell-penetrating peptide (CPP) (PubMed:27114612). In addition, it has been shown to dose-dependently stimulate ryanodine binding to RyR1 (EC(50)=0.3 nM) (PubMed:27114612). It also augments the bell-shaped calcium-[3H]ryanodine binding curve that is maximal at about 10 uM calcium concentration (PubMed:27114612). It binds a different site as ryanodine (By similarity). It acts synergistically with caffeine (By similarity). In vivo, intracerebroventricular injection into mice induces neurotoxic symptoms, followed by death (By similarity).</text>
</comment>
<comment type="subcellular location">
    <subcellularLocation>
        <location evidence="10">Secreted</location>
    </subcellularLocation>
</comment>
<comment type="tissue specificity">
    <text evidence="10">Expressed by the venom gland.</text>
</comment>
<comment type="domain">
    <text evidence="4">The presence of a 'disulfide through disulfide knot' structurally defines this protein as a knottin.</text>
</comment>
<comment type="similarity">
    <text evidence="10">Belongs to the scorpion calcin family.</text>
</comment>
<keyword id="KW-0108">Calcium channel impairing toxin</keyword>
<keyword id="KW-0165">Cleavage on pair of basic residues</keyword>
<keyword id="KW-1015">Disulfide bond</keyword>
<keyword id="KW-0872">Ion channel impairing toxin</keyword>
<keyword id="KW-0960">Knottin</keyword>
<keyword id="KW-0528">Neurotoxin</keyword>
<keyword id="KW-1219">Ryanodine-sensitive calcium-release channel impairing toxin</keyword>
<keyword id="KW-0964">Secreted</keyword>
<keyword id="KW-0732">Signal</keyword>
<keyword id="KW-0800">Toxin</keyword>
<protein>
    <recommendedName>
        <fullName evidence="9">Opicalcin-1</fullName>
        <shortName evidence="9">OpCa1</shortName>
    </recommendedName>
    <alternativeName>
        <fullName evidence="8">Opicalcine-1</fullName>
    </alternativeName>
</protein>
<organism>
    <name type="scientific">Opistophthalmus carinatus</name>
    <name type="common">African yellow leg scorpion</name>
    <dbReference type="NCBI Taxonomy" id="190115"/>
    <lineage>
        <taxon>Eukaryota</taxon>
        <taxon>Metazoa</taxon>
        <taxon>Ecdysozoa</taxon>
        <taxon>Arthropoda</taxon>
        <taxon>Chelicerata</taxon>
        <taxon>Arachnida</taxon>
        <taxon>Scorpiones</taxon>
        <taxon>Iurida</taxon>
        <taxon>Scorpionoidea</taxon>
        <taxon>Scorpionidae</taxon>
        <taxon>Opistophthalminae</taxon>
        <taxon>Opistophthalmus</taxon>
    </lineage>
</organism>